<dbReference type="EMBL" id="AAFI02000103">
    <property type="protein sequence ID" value="EAL63645.1"/>
    <property type="molecule type" value="Genomic_DNA"/>
</dbReference>
<dbReference type="RefSeq" id="XP_637137.1">
    <property type="nucleotide sequence ID" value="XM_632045.1"/>
</dbReference>
<dbReference type="PaxDb" id="44689-DDB0219256"/>
<dbReference type="EnsemblProtists" id="EAL63645">
    <property type="protein sequence ID" value="EAL63645"/>
    <property type="gene ID" value="DDB_G0287673"/>
</dbReference>
<dbReference type="GeneID" id="8626232"/>
<dbReference type="KEGG" id="ddi:DDB_G0287673"/>
<dbReference type="dictyBase" id="DDB_G0287673"/>
<dbReference type="HOGENOM" id="CLU_2214936_0_0_1"/>
<dbReference type="InParanoid" id="Q54K27"/>
<dbReference type="PRO" id="PR:Q54K27"/>
<dbReference type="Proteomes" id="UP000002195">
    <property type="component" value="Chromosome 5"/>
</dbReference>
<proteinExistence type="predicted"/>
<keyword id="KW-1185">Reference proteome</keyword>
<accession>Q54K27</accession>
<feature type="chain" id="PRO_0000347014" description="Putative uncharacterized protein DDB_G0287673">
    <location>
        <begin position="1"/>
        <end position="107"/>
    </location>
</feature>
<organism>
    <name type="scientific">Dictyostelium discoideum</name>
    <name type="common">Social amoeba</name>
    <dbReference type="NCBI Taxonomy" id="44689"/>
    <lineage>
        <taxon>Eukaryota</taxon>
        <taxon>Amoebozoa</taxon>
        <taxon>Evosea</taxon>
        <taxon>Eumycetozoa</taxon>
        <taxon>Dictyostelia</taxon>
        <taxon>Dictyosteliales</taxon>
        <taxon>Dictyosteliaceae</taxon>
        <taxon>Dictyostelium</taxon>
    </lineage>
</organism>
<gene>
    <name type="ORF">DDB_G0287673</name>
</gene>
<name>Y2192_DICDI</name>
<sequence length="107" mass="12893">MVTTNINNNKSINIISKDITYFNNNNNNNNNNNNNNNNIFLLNEINNQQDRINQLRIDDEFINNYHHTHQETINTRGRRFFKFLLKFNKKKGSNSDTIQVHFFTPYW</sequence>
<protein>
    <recommendedName>
        <fullName>Putative uncharacterized protein DDB_G0287673</fullName>
    </recommendedName>
</protein>
<reference key="1">
    <citation type="journal article" date="2005" name="Nature">
        <title>The genome of the social amoeba Dictyostelium discoideum.</title>
        <authorList>
            <person name="Eichinger L."/>
            <person name="Pachebat J.A."/>
            <person name="Gloeckner G."/>
            <person name="Rajandream M.A."/>
            <person name="Sucgang R."/>
            <person name="Berriman M."/>
            <person name="Song J."/>
            <person name="Olsen R."/>
            <person name="Szafranski K."/>
            <person name="Xu Q."/>
            <person name="Tunggal B."/>
            <person name="Kummerfeld S."/>
            <person name="Madera M."/>
            <person name="Konfortov B.A."/>
            <person name="Rivero F."/>
            <person name="Bankier A.T."/>
            <person name="Lehmann R."/>
            <person name="Hamlin N."/>
            <person name="Davies R."/>
            <person name="Gaudet P."/>
            <person name="Fey P."/>
            <person name="Pilcher K."/>
            <person name="Chen G."/>
            <person name="Saunders D."/>
            <person name="Sodergren E.J."/>
            <person name="Davis P."/>
            <person name="Kerhornou A."/>
            <person name="Nie X."/>
            <person name="Hall N."/>
            <person name="Anjard C."/>
            <person name="Hemphill L."/>
            <person name="Bason N."/>
            <person name="Farbrother P."/>
            <person name="Desany B."/>
            <person name="Just E."/>
            <person name="Morio T."/>
            <person name="Rost R."/>
            <person name="Churcher C.M."/>
            <person name="Cooper J."/>
            <person name="Haydock S."/>
            <person name="van Driessche N."/>
            <person name="Cronin A."/>
            <person name="Goodhead I."/>
            <person name="Muzny D.M."/>
            <person name="Mourier T."/>
            <person name="Pain A."/>
            <person name="Lu M."/>
            <person name="Harper D."/>
            <person name="Lindsay R."/>
            <person name="Hauser H."/>
            <person name="James K.D."/>
            <person name="Quiles M."/>
            <person name="Madan Babu M."/>
            <person name="Saito T."/>
            <person name="Buchrieser C."/>
            <person name="Wardroper A."/>
            <person name="Felder M."/>
            <person name="Thangavelu M."/>
            <person name="Johnson D."/>
            <person name="Knights A."/>
            <person name="Loulseged H."/>
            <person name="Mungall K.L."/>
            <person name="Oliver K."/>
            <person name="Price C."/>
            <person name="Quail M.A."/>
            <person name="Urushihara H."/>
            <person name="Hernandez J."/>
            <person name="Rabbinowitsch E."/>
            <person name="Steffen D."/>
            <person name="Sanders M."/>
            <person name="Ma J."/>
            <person name="Kohara Y."/>
            <person name="Sharp S."/>
            <person name="Simmonds M.N."/>
            <person name="Spiegler S."/>
            <person name="Tivey A."/>
            <person name="Sugano S."/>
            <person name="White B."/>
            <person name="Walker D."/>
            <person name="Woodward J.R."/>
            <person name="Winckler T."/>
            <person name="Tanaka Y."/>
            <person name="Shaulsky G."/>
            <person name="Schleicher M."/>
            <person name="Weinstock G.M."/>
            <person name="Rosenthal A."/>
            <person name="Cox E.C."/>
            <person name="Chisholm R.L."/>
            <person name="Gibbs R.A."/>
            <person name="Loomis W.F."/>
            <person name="Platzer M."/>
            <person name="Kay R.R."/>
            <person name="Williams J.G."/>
            <person name="Dear P.H."/>
            <person name="Noegel A.A."/>
            <person name="Barrell B.G."/>
            <person name="Kuspa A."/>
        </authorList>
    </citation>
    <scope>NUCLEOTIDE SEQUENCE [LARGE SCALE GENOMIC DNA]</scope>
    <source>
        <strain>AX4</strain>
    </source>
</reference>